<organism>
    <name type="scientific">Ajellomyces capsulatus (strain G186AR / H82 / ATCC MYA-2454 / RMSCC 2432)</name>
    <name type="common">Darling's disease fungus</name>
    <name type="synonym">Histoplasma capsulatum</name>
    <dbReference type="NCBI Taxonomy" id="447093"/>
    <lineage>
        <taxon>Eukaryota</taxon>
        <taxon>Fungi</taxon>
        <taxon>Dikarya</taxon>
        <taxon>Ascomycota</taxon>
        <taxon>Pezizomycotina</taxon>
        <taxon>Eurotiomycetes</taxon>
        <taxon>Eurotiomycetidae</taxon>
        <taxon>Onygenales</taxon>
        <taxon>Ajellomycetaceae</taxon>
        <taxon>Histoplasma</taxon>
    </lineage>
</organism>
<sequence>MAVGKNKRLSKGKKGLKKRTQDPFSRKDEYSVKAPSTFAVRDVGKTLVNRTTGLKNANDSLKGRIFEVSLADLQNDEDHAFRKVKLRVDEVQGKNCLTNFHGLDFTSDKLRSLVRKWQTLIEANVTVKTTDDYLLRLFAIAFTKRRPNQIKKTTYARSSQIRAIRKKITEIIQREASTRTLAQLTKLIPEVIGREIEKSTHGIYPLQNVHIRKVKLLKSPKFDLGALLALHGESSTDDKGQKVEREFKEQVLESV</sequence>
<protein>
    <recommendedName>
        <fullName evidence="1">Small ribosomal subunit protein eS1</fullName>
    </recommendedName>
    <alternativeName>
        <fullName evidence="3">40S ribosomal protein S1</fullName>
    </alternativeName>
</protein>
<proteinExistence type="inferred from homology"/>
<dbReference type="EMBL" id="GG663380">
    <property type="protein sequence ID" value="EEH02972.1"/>
    <property type="molecule type" value="Genomic_DNA"/>
</dbReference>
<dbReference type="SMR" id="C0P0F6"/>
<dbReference type="FunCoup" id="C0P0F6">
    <property type="interactions" value="1210"/>
</dbReference>
<dbReference type="STRING" id="447093.C0P0F6"/>
<dbReference type="VEuPathDB" id="FungiDB:I7I50_09010"/>
<dbReference type="HOGENOM" id="CLU_062507_0_0_1"/>
<dbReference type="InParanoid" id="C0P0F6"/>
<dbReference type="Proteomes" id="UP000001631">
    <property type="component" value="Unassembled WGS sequence"/>
</dbReference>
<dbReference type="GO" id="GO:0022627">
    <property type="term" value="C:cytosolic small ribosomal subunit"/>
    <property type="evidence" value="ECO:0007669"/>
    <property type="project" value="UniProtKB-UniRule"/>
</dbReference>
<dbReference type="GO" id="GO:0003735">
    <property type="term" value="F:structural constituent of ribosome"/>
    <property type="evidence" value="ECO:0007669"/>
    <property type="project" value="UniProtKB-UniRule"/>
</dbReference>
<dbReference type="GO" id="GO:0006412">
    <property type="term" value="P:translation"/>
    <property type="evidence" value="ECO:0007669"/>
    <property type="project" value="UniProtKB-UniRule"/>
</dbReference>
<dbReference type="HAMAP" id="MF_03122">
    <property type="entry name" value="Ribosomal_eS1_euk"/>
    <property type="match status" value="1"/>
</dbReference>
<dbReference type="InterPro" id="IPR001593">
    <property type="entry name" value="Ribosomal_eS1"/>
</dbReference>
<dbReference type="InterPro" id="IPR018281">
    <property type="entry name" value="Ribosomal_eS1_CS"/>
</dbReference>
<dbReference type="InterPro" id="IPR027500">
    <property type="entry name" value="Ribosomal_eS1_euk"/>
</dbReference>
<dbReference type="PANTHER" id="PTHR11830">
    <property type="entry name" value="40S RIBOSOMAL PROTEIN S3A"/>
    <property type="match status" value="1"/>
</dbReference>
<dbReference type="Pfam" id="PF01015">
    <property type="entry name" value="Ribosomal_S3Ae"/>
    <property type="match status" value="1"/>
</dbReference>
<dbReference type="SMART" id="SM01397">
    <property type="entry name" value="Ribosomal_S3Ae"/>
    <property type="match status" value="1"/>
</dbReference>
<dbReference type="PROSITE" id="PS01191">
    <property type="entry name" value="RIBOSOMAL_S3AE"/>
    <property type="match status" value="1"/>
</dbReference>
<accession>C0P0F6</accession>
<evidence type="ECO:0000255" key="1">
    <source>
        <dbReference type="HAMAP-Rule" id="MF_03122"/>
    </source>
</evidence>
<evidence type="ECO:0000256" key="2">
    <source>
        <dbReference type="SAM" id="MobiDB-lite"/>
    </source>
</evidence>
<evidence type="ECO:0000305" key="3"/>
<gene>
    <name evidence="1" type="primary">RPS1</name>
    <name type="ORF">HCBG_08875</name>
</gene>
<reference key="1">
    <citation type="submission" date="2009-02" db="EMBL/GenBank/DDBJ databases">
        <title>The genome sequence of Ajellomyces capsulatus strain G186AR.</title>
        <authorList>
            <person name="Champion M."/>
            <person name="Cuomo C.A."/>
            <person name="Ma L.-J."/>
            <person name="Henn M.R."/>
            <person name="Sil A."/>
            <person name="Goldman B."/>
            <person name="Young S.K."/>
            <person name="Kodira C.D."/>
            <person name="Zeng Q."/>
            <person name="Koehrsen M."/>
            <person name="Alvarado L."/>
            <person name="Berlin A."/>
            <person name="Borenstein D."/>
            <person name="Chen Z."/>
            <person name="Engels R."/>
            <person name="Freedman E."/>
            <person name="Gellesch M."/>
            <person name="Goldberg J."/>
            <person name="Griggs A."/>
            <person name="Gujja S."/>
            <person name="Heiman D."/>
            <person name="Hepburn T."/>
            <person name="Howarth C."/>
            <person name="Jen D."/>
            <person name="Larson L."/>
            <person name="Lewis B."/>
            <person name="Mehta T."/>
            <person name="Park D."/>
            <person name="Pearson M."/>
            <person name="Roberts A."/>
            <person name="Saif S."/>
            <person name="Shea T."/>
            <person name="Shenoy N."/>
            <person name="Sisk P."/>
            <person name="Stolte C."/>
            <person name="Sykes S."/>
            <person name="Walk T."/>
            <person name="White J."/>
            <person name="Yandava C."/>
            <person name="Klein B."/>
            <person name="McEwen J.G."/>
            <person name="Puccia R."/>
            <person name="Goldman G.H."/>
            <person name="Felipe M.S."/>
            <person name="Nino-Vega G."/>
            <person name="San-Blas G."/>
            <person name="Taylor J."/>
            <person name="Mendoza L."/>
            <person name="Galagan J.E."/>
            <person name="Nusbaum C."/>
            <person name="Birren B.W."/>
        </authorList>
    </citation>
    <scope>NUCLEOTIDE SEQUENCE [LARGE SCALE GENOMIC DNA]</scope>
    <source>
        <strain>G186AR / H82 / ATCC MYA-2454 / RMSCC 2432</strain>
    </source>
</reference>
<comment type="subunit">
    <text evidence="1">Component of the small ribosomal subunit. Mature ribosomes consist of a small (40S) and a large (60S) subunit. The 40S subunit contains about 33 different proteins and 1 molecule of RNA (18S). The 60S subunit contains about 49 different proteins and 3 molecules of RNA (25S, 5.8S and 5S).</text>
</comment>
<comment type="subcellular location">
    <subcellularLocation>
        <location evidence="1">Cytoplasm</location>
    </subcellularLocation>
</comment>
<comment type="similarity">
    <text evidence="1">Belongs to the eukaryotic ribosomal protein eS1 family.</text>
</comment>
<name>RS3A_AJECG</name>
<feature type="initiator methionine" description="Removed" evidence="1">
    <location>
        <position position="1"/>
    </location>
</feature>
<feature type="chain" id="PRO_0000389350" description="Small ribosomal subunit protein eS1">
    <location>
        <begin position="2"/>
        <end position="255"/>
    </location>
</feature>
<feature type="region of interest" description="Disordered" evidence="2">
    <location>
        <begin position="1"/>
        <end position="28"/>
    </location>
</feature>
<feature type="compositionally biased region" description="Basic residues" evidence="2">
    <location>
        <begin position="1"/>
        <end position="18"/>
    </location>
</feature>
<feature type="compositionally biased region" description="Basic and acidic residues" evidence="2">
    <location>
        <begin position="19"/>
        <end position="28"/>
    </location>
</feature>
<feature type="modified residue" description="N-acetylalanine; partial" evidence="1">
    <location>
        <position position="2"/>
    </location>
</feature>
<keyword id="KW-0007">Acetylation</keyword>
<keyword id="KW-0963">Cytoplasm</keyword>
<keyword id="KW-1185">Reference proteome</keyword>
<keyword id="KW-0687">Ribonucleoprotein</keyword>
<keyword id="KW-0689">Ribosomal protein</keyword>